<evidence type="ECO:0000255" key="1">
    <source>
        <dbReference type="HAMAP-Rule" id="MF_01074"/>
    </source>
</evidence>
<gene>
    <name evidence="1" type="primary">larC</name>
    <name type="ordered locus">GK1963</name>
</gene>
<protein>
    <recommendedName>
        <fullName evidence="1">Pyridinium-3,5-bisthiocarboxylic acid mononucleotide nickel insertion protein</fullName>
        <shortName evidence="1">P2TMN nickel insertion protein</shortName>
        <ecNumber evidence="1">4.99.1.12</ecNumber>
    </recommendedName>
    <alternativeName>
        <fullName evidence="1">Nickel-pincer cofactor biosynthesis protein LarC</fullName>
    </alternativeName>
</protein>
<accession>Q5KYI8</accession>
<comment type="function">
    <text evidence="1">Involved in the biosynthesis of a nickel-pincer cofactor ((SCS)Ni(II) pincer complex). Binds Ni(2+), and functions in nickel delivery to pyridinium-3,5-bisthiocarboxylic acid mononucleotide (P2TMN), to form the mature cofactor. Is thus probably required for the activation of nickel-pincer cofactor-dependent enzymes.</text>
</comment>
<comment type="catalytic activity">
    <reaction evidence="1">
        <text>Ni(II)-pyridinium-3,5-bisthiocarboxylate mononucleotide = pyridinium-3,5-bisthiocarboxylate mononucleotide + Ni(2+)</text>
        <dbReference type="Rhea" id="RHEA:54784"/>
        <dbReference type="ChEBI" id="CHEBI:49786"/>
        <dbReference type="ChEBI" id="CHEBI:137372"/>
        <dbReference type="ChEBI" id="CHEBI:137373"/>
        <dbReference type="EC" id="4.99.1.12"/>
    </reaction>
</comment>
<comment type="similarity">
    <text evidence="1">Belongs to the LarC family.</text>
</comment>
<keyword id="KW-0456">Lyase</keyword>
<keyword id="KW-0533">Nickel</keyword>
<keyword id="KW-1185">Reference proteome</keyword>
<organism>
    <name type="scientific">Geobacillus kaustophilus (strain HTA426)</name>
    <dbReference type="NCBI Taxonomy" id="235909"/>
    <lineage>
        <taxon>Bacteria</taxon>
        <taxon>Bacillati</taxon>
        <taxon>Bacillota</taxon>
        <taxon>Bacilli</taxon>
        <taxon>Bacillales</taxon>
        <taxon>Anoxybacillaceae</taxon>
        <taxon>Geobacillus</taxon>
        <taxon>Geobacillus thermoleovorans group</taxon>
    </lineage>
</organism>
<name>LARC_GEOKA</name>
<sequence>MKILYLDCFSGISGDMMVGALVDAGVPSEKIEVELKKLSLSGYKLQWGKVVKKGISATKFDVIIQESIEGGHHHQSHHAHRHYSDIIDMIRRSELSEEVKQRAGQIFHCIAVAEAKIHGIPVENVHFHEVGAVDSIVDIVATAIALTELHIDYIISAPIPLGHGSIRCAHGVYPVPAPATLEILQGVPVVSNHLPFELTTPTGAGIVKSQVNSYGPLPSMKISAIGYGAGTRDLPDQPNVLRVVIGEETRITSSGPSLFHSKEETVYILECQLDDMPGEALGYVMDGLFQKGALDVFYTPVFMKKNRPGVLLTVLTSATHVEQCEQFMLKETTTLGIRKDIWVREVLERDVVTVATSYGNIRVKQAIHKGKVIRQMPEYEDVKEAALTHQVAFLDVYAEAAEQARRRIKGE</sequence>
<feature type="chain" id="PRO_1000064648" description="Pyridinium-3,5-bisthiocarboxylic acid mononucleotide nickel insertion protein">
    <location>
        <begin position="1"/>
        <end position="411"/>
    </location>
</feature>
<dbReference type="EC" id="4.99.1.12" evidence="1"/>
<dbReference type="EMBL" id="BA000043">
    <property type="protein sequence ID" value="BAD76248.1"/>
    <property type="molecule type" value="Genomic_DNA"/>
</dbReference>
<dbReference type="RefSeq" id="WP_011231449.1">
    <property type="nucleotide sequence ID" value="NC_006510.1"/>
</dbReference>
<dbReference type="SMR" id="Q5KYI8"/>
<dbReference type="STRING" id="235909.GK1963"/>
<dbReference type="KEGG" id="gka:GK1963"/>
<dbReference type="PATRIC" id="fig|235909.7.peg.2103"/>
<dbReference type="eggNOG" id="COG1641">
    <property type="taxonomic scope" value="Bacteria"/>
</dbReference>
<dbReference type="HOGENOM" id="CLU_028523_2_1_9"/>
<dbReference type="Proteomes" id="UP000001172">
    <property type="component" value="Chromosome"/>
</dbReference>
<dbReference type="GO" id="GO:0016829">
    <property type="term" value="F:lyase activity"/>
    <property type="evidence" value="ECO:0007669"/>
    <property type="project" value="UniProtKB-UniRule"/>
</dbReference>
<dbReference type="GO" id="GO:0016151">
    <property type="term" value="F:nickel cation binding"/>
    <property type="evidence" value="ECO:0007669"/>
    <property type="project" value="UniProtKB-UniRule"/>
</dbReference>
<dbReference type="GO" id="GO:0051604">
    <property type="term" value="P:protein maturation"/>
    <property type="evidence" value="ECO:0007669"/>
    <property type="project" value="UniProtKB-UniRule"/>
</dbReference>
<dbReference type="Gene3D" id="3.10.20.300">
    <property type="entry name" value="mk0293 like domain"/>
    <property type="match status" value="1"/>
</dbReference>
<dbReference type="Gene3D" id="3.30.70.1380">
    <property type="entry name" value="Transcriptional regulatory protein pf0864 domain like"/>
    <property type="match status" value="1"/>
</dbReference>
<dbReference type="HAMAP" id="MF_01074">
    <property type="entry name" value="LarC"/>
    <property type="match status" value="1"/>
</dbReference>
<dbReference type="InterPro" id="IPR002822">
    <property type="entry name" value="Ni_insertion"/>
</dbReference>
<dbReference type="NCBIfam" id="TIGR00299">
    <property type="entry name" value="nickel pincer cofactor biosynthesis protein LarC"/>
    <property type="match status" value="1"/>
</dbReference>
<dbReference type="PANTHER" id="PTHR36566">
    <property type="entry name" value="NICKEL INSERTION PROTEIN-RELATED"/>
    <property type="match status" value="1"/>
</dbReference>
<dbReference type="PANTHER" id="PTHR36566:SF1">
    <property type="entry name" value="PYRIDINIUM-3,5-BISTHIOCARBOXYLIC ACID MONONUCLEOTIDE NICKEL INSERTION PROTEIN"/>
    <property type="match status" value="1"/>
</dbReference>
<dbReference type="Pfam" id="PF01969">
    <property type="entry name" value="Ni_insertion"/>
    <property type="match status" value="1"/>
</dbReference>
<reference key="1">
    <citation type="journal article" date="2004" name="Nucleic Acids Res.">
        <title>Thermoadaptation trait revealed by the genome sequence of thermophilic Geobacillus kaustophilus.</title>
        <authorList>
            <person name="Takami H."/>
            <person name="Takaki Y."/>
            <person name="Chee G.-J."/>
            <person name="Nishi S."/>
            <person name="Shimamura S."/>
            <person name="Suzuki H."/>
            <person name="Matsui S."/>
            <person name="Uchiyama I."/>
        </authorList>
    </citation>
    <scope>NUCLEOTIDE SEQUENCE [LARGE SCALE GENOMIC DNA]</scope>
    <source>
        <strain>HTA426</strain>
    </source>
</reference>
<proteinExistence type="inferred from homology"/>